<name>RHA4A_ARATH</name>
<sequence>MVDPQSPITPHLYPQAIQLKLYQAFIFSIPILFSIILFLLFYLFYLKRRASSLSSPSPMILPVSSSHQTSSHLPSVCLLDVKVELKDKLHVVLFNEELGTRDSLCCVCLGEFELKEELVEMPLCKHIFHLDCIHLWLYSHNTCPLCRSSVSISSTKTSVDDDNDHPDSPQTSPV</sequence>
<comment type="function">
    <text evidence="1">Probable E3 ubiquitin-protein ligase that may possess E3 ubiquitin ligase activity in vitro.</text>
</comment>
<comment type="catalytic activity">
    <reaction>
        <text>S-ubiquitinyl-[E2 ubiquitin-conjugating enzyme]-L-cysteine + [acceptor protein]-L-lysine = [E2 ubiquitin-conjugating enzyme]-L-cysteine + N(6)-ubiquitinyl-[acceptor protein]-L-lysine.</text>
        <dbReference type="EC" id="2.3.2.27"/>
    </reaction>
</comment>
<comment type="pathway">
    <text evidence="6">Protein modification; protein ubiquitination.</text>
</comment>
<comment type="tissue specificity">
    <text evidence="4">Expressed in stems, flowers, cauline leaves and roots.</text>
</comment>
<organism>
    <name type="scientific">Arabidopsis thaliana</name>
    <name type="common">Mouse-ear cress</name>
    <dbReference type="NCBI Taxonomy" id="3702"/>
    <lineage>
        <taxon>Eukaryota</taxon>
        <taxon>Viridiplantae</taxon>
        <taxon>Streptophyta</taxon>
        <taxon>Embryophyta</taxon>
        <taxon>Tracheophyta</taxon>
        <taxon>Spermatophyta</taxon>
        <taxon>Magnoliopsida</taxon>
        <taxon>eudicotyledons</taxon>
        <taxon>Gunneridae</taxon>
        <taxon>Pentapetalae</taxon>
        <taxon>rosids</taxon>
        <taxon>malvids</taxon>
        <taxon>Brassicales</taxon>
        <taxon>Brassicaceae</taxon>
        <taxon>Camelineae</taxon>
        <taxon>Arabidopsis</taxon>
    </lineage>
</organism>
<proteinExistence type="evidence at transcript level"/>
<dbReference type="EC" id="2.3.2.27"/>
<dbReference type="EMBL" id="AF079178">
    <property type="protein sequence ID" value="AAC69852.1"/>
    <property type="molecule type" value="mRNA"/>
</dbReference>
<dbReference type="EMBL" id="AL078468">
    <property type="status" value="NOT_ANNOTATED_CDS"/>
    <property type="molecule type" value="Genomic_DNA"/>
</dbReference>
<dbReference type="EMBL" id="CP002687">
    <property type="protein sequence ID" value="AEE84840.1"/>
    <property type="molecule type" value="Genomic_DNA"/>
</dbReference>
<dbReference type="EMBL" id="BT005844">
    <property type="protein sequence ID" value="AAO64779.1"/>
    <property type="molecule type" value="mRNA"/>
</dbReference>
<dbReference type="PIR" id="T51850">
    <property type="entry name" value="T51850"/>
</dbReference>
<dbReference type="RefSeq" id="NP_974604.1">
    <property type="nucleotide sequence ID" value="NM_202875.2"/>
</dbReference>
<dbReference type="SMR" id="Q84TF5"/>
<dbReference type="GlyGen" id="Q84TF5">
    <property type="glycosylation" value="1 site"/>
</dbReference>
<dbReference type="PaxDb" id="3702-AT4G24015.1"/>
<dbReference type="EnsemblPlants" id="AT4G24015.1">
    <property type="protein sequence ID" value="AT4G24015.1"/>
    <property type="gene ID" value="AT4G24015"/>
</dbReference>
<dbReference type="GeneID" id="2745724"/>
<dbReference type="Gramene" id="AT4G24015.1">
    <property type="protein sequence ID" value="AT4G24015.1"/>
    <property type="gene ID" value="AT4G24015"/>
</dbReference>
<dbReference type="KEGG" id="ath:AT4G24015"/>
<dbReference type="Araport" id="AT4G24015"/>
<dbReference type="TAIR" id="AT4G24015">
    <property type="gene designation" value="ATL82"/>
</dbReference>
<dbReference type="eggNOG" id="KOG0800">
    <property type="taxonomic scope" value="Eukaryota"/>
</dbReference>
<dbReference type="HOGENOM" id="CLU_078082_2_1_1"/>
<dbReference type="InParanoid" id="Q84TF5"/>
<dbReference type="OMA" id="VEMPLCK"/>
<dbReference type="OrthoDB" id="8062037at2759"/>
<dbReference type="PhylomeDB" id="Q84TF5"/>
<dbReference type="UniPathway" id="UPA00143"/>
<dbReference type="PRO" id="PR:Q84TF5"/>
<dbReference type="Proteomes" id="UP000006548">
    <property type="component" value="Chromosome 4"/>
</dbReference>
<dbReference type="ExpressionAtlas" id="Q84TF5">
    <property type="expression patterns" value="baseline and differential"/>
</dbReference>
<dbReference type="GO" id="GO:0016740">
    <property type="term" value="F:transferase activity"/>
    <property type="evidence" value="ECO:0007669"/>
    <property type="project" value="UniProtKB-KW"/>
</dbReference>
<dbReference type="GO" id="GO:0008270">
    <property type="term" value="F:zinc ion binding"/>
    <property type="evidence" value="ECO:0007669"/>
    <property type="project" value="UniProtKB-KW"/>
</dbReference>
<dbReference type="GO" id="GO:0016567">
    <property type="term" value="P:protein ubiquitination"/>
    <property type="evidence" value="ECO:0007669"/>
    <property type="project" value="UniProtKB-UniPathway"/>
</dbReference>
<dbReference type="CDD" id="cd16461">
    <property type="entry name" value="RING-H2_EL5-like"/>
    <property type="match status" value="1"/>
</dbReference>
<dbReference type="FunFam" id="3.30.40.10:FF:000764">
    <property type="entry name" value="RING-H2 zinc finger protein RHA4a"/>
    <property type="match status" value="1"/>
</dbReference>
<dbReference type="Gene3D" id="3.30.40.10">
    <property type="entry name" value="Zinc/RING finger domain, C3HC4 (zinc finger)"/>
    <property type="match status" value="1"/>
</dbReference>
<dbReference type="InterPro" id="IPR044600">
    <property type="entry name" value="ATL1/ATL16-like"/>
</dbReference>
<dbReference type="InterPro" id="IPR001841">
    <property type="entry name" value="Znf_RING"/>
</dbReference>
<dbReference type="InterPro" id="IPR013083">
    <property type="entry name" value="Znf_RING/FYVE/PHD"/>
</dbReference>
<dbReference type="PANTHER" id="PTHR46913:SF23">
    <property type="entry name" value="E3 UBIQUITIN-PROTEIN LIGASE RHA4A-RELATED"/>
    <property type="match status" value="1"/>
</dbReference>
<dbReference type="PANTHER" id="PTHR46913">
    <property type="entry name" value="RING-H2 FINGER PROTEIN ATL16"/>
    <property type="match status" value="1"/>
</dbReference>
<dbReference type="Pfam" id="PF13639">
    <property type="entry name" value="zf-RING_2"/>
    <property type="match status" value="1"/>
</dbReference>
<dbReference type="SMART" id="SM00184">
    <property type="entry name" value="RING"/>
    <property type="match status" value="1"/>
</dbReference>
<dbReference type="SUPFAM" id="SSF57850">
    <property type="entry name" value="RING/U-box"/>
    <property type="match status" value="1"/>
</dbReference>
<dbReference type="PROSITE" id="PS50089">
    <property type="entry name" value="ZF_RING_2"/>
    <property type="match status" value="1"/>
</dbReference>
<protein>
    <recommendedName>
        <fullName evidence="6">Probable E3 ubiquitin-protein ligase RHA4A</fullName>
        <ecNumber>2.3.2.27</ecNumber>
    </recommendedName>
    <alternativeName>
        <fullName evidence="5">RING-H2 finger A4a</fullName>
    </alternativeName>
    <alternativeName>
        <fullName evidence="6">RING-H2 zinc finger protein RHA4a</fullName>
    </alternativeName>
    <alternativeName>
        <fullName evidence="6">RING-type E3 ubiquitin transferase RHA4A</fullName>
    </alternativeName>
</protein>
<evidence type="ECO:0000250" key="1">
    <source>
        <dbReference type="UniProtKB" id="Q9ZT50"/>
    </source>
</evidence>
<evidence type="ECO:0000255" key="2">
    <source>
        <dbReference type="PROSITE-ProRule" id="PRU00175"/>
    </source>
</evidence>
<evidence type="ECO:0000256" key="3">
    <source>
        <dbReference type="SAM" id="MobiDB-lite"/>
    </source>
</evidence>
<evidence type="ECO:0000269" key="4">
    <source>
    </source>
</evidence>
<evidence type="ECO:0000303" key="5">
    <source>
    </source>
</evidence>
<evidence type="ECO:0000305" key="6"/>
<reference key="1">
    <citation type="journal article" date="1998" name="FEBS Lett.">
        <title>Widespread occurrence of a highly conserved RING-H2 zinc finger motif in the model plant Arabidopsis thaliana.</title>
        <authorList>
            <person name="Jensen R.B."/>
            <person name="Jensen K.L."/>
            <person name="Jespersen H.M."/>
            <person name="Skriver K."/>
        </authorList>
    </citation>
    <scope>NUCLEOTIDE SEQUENCE [MRNA]</scope>
    <scope>TISSUE SPECIFICITY</scope>
    <source>
        <strain>cv. Columbia</strain>
    </source>
</reference>
<reference key="2">
    <citation type="journal article" date="1999" name="Nature">
        <title>Sequence and analysis of chromosome 4 of the plant Arabidopsis thaliana.</title>
        <authorList>
            <person name="Mayer K.F.X."/>
            <person name="Schueller C."/>
            <person name="Wambutt R."/>
            <person name="Murphy G."/>
            <person name="Volckaert G."/>
            <person name="Pohl T."/>
            <person name="Duesterhoeft A."/>
            <person name="Stiekema W."/>
            <person name="Entian K.-D."/>
            <person name="Terryn N."/>
            <person name="Harris B."/>
            <person name="Ansorge W."/>
            <person name="Brandt P."/>
            <person name="Grivell L.A."/>
            <person name="Rieger M."/>
            <person name="Weichselgartner M."/>
            <person name="de Simone V."/>
            <person name="Obermaier B."/>
            <person name="Mache R."/>
            <person name="Mueller M."/>
            <person name="Kreis M."/>
            <person name="Delseny M."/>
            <person name="Puigdomenech P."/>
            <person name="Watson M."/>
            <person name="Schmidtheini T."/>
            <person name="Reichert B."/>
            <person name="Portetelle D."/>
            <person name="Perez-Alonso M."/>
            <person name="Boutry M."/>
            <person name="Bancroft I."/>
            <person name="Vos P."/>
            <person name="Hoheisel J."/>
            <person name="Zimmermann W."/>
            <person name="Wedler H."/>
            <person name="Ridley P."/>
            <person name="Langham S.-A."/>
            <person name="McCullagh B."/>
            <person name="Bilham L."/>
            <person name="Robben J."/>
            <person name="van der Schueren J."/>
            <person name="Grymonprez B."/>
            <person name="Chuang Y.-J."/>
            <person name="Vandenbussche F."/>
            <person name="Braeken M."/>
            <person name="Weltjens I."/>
            <person name="Voet M."/>
            <person name="Bastiaens I."/>
            <person name="Aert R."/>
            <person name="Defoor E."/>
            <person name="Weitzenegger T."/>
            <person name="Bothe G."/>
            <person name="Ramsperger U."/>
            <person name="Hilbert H."/>
            <person name="Braun M."/>
            <person name="Holzer E."/>
            <person name="Brandt A."/>
            <person name="Peters S."/>
            <person name="van Staveren M."/>
            <person name="Dirkse W."/>
            <person name="Mooijman P."/>
            <person name="Klein Lankhorst R."/>
            <person name="Rose M."/>
            <person name="Hauf J."/>
            <person name="Koetter P."/>
            <person name="Berneiser S."/>
            <person name="Hempel S."/>
            <person name="Feldpausch M."/>
            <person name="Lamberth S."/>
            <person name="Van den Daele H."/>
            <person name="De Keyser A."/>
            <person name="Buysshaert C."/>
            <person name="Gielen J."/>
            <person name="Villarroel R."/>
            <person name="De Clercq R."/>
            <person name="van Montagu M."/>
            <person name="Rogers J."/>
            <person name="Cronin A."/>
            <person name="Quail M.A."/>
            <person name="Bray-Allen S."/>
            <person name="Clark L."/>
            <person name="Doggett J."/>
            <person name="Hall S."/>
            <person name="Kay M."/>
            <person name="Lennard N."/>
            <person name="McLay K."/>
            <person name="Mayes R."/>
            <person name="Pettett A."/>
            <person name="Rajandream M.A."/>
            <person name="Lyne M."/>
            <person name="Benes V."/>
            <person name="Rechmann S."/>
            <person name="Borkova D."/>
            <person name="Bloecker H."/>
            <person name="Scharfe M."/>
            <person name="Grimm M."/>
            <person name="Loehnert T.-H."/>
            <person name="Dose S."/>
            <person name="de Haan M."/>
            <person name="Maarse A.C."/>
            <person name="Schaefer M."/>
            <person name="Mueller-Auer S."/>
            <person name="Gabel C."/>
            <person name="Fuchs M."/>
            <person name="Fartmann B."/>
            <person name="Granderath K."/>
            <person name="Dauner D."/>
            <person name="Herzl A."/>
            <person name="Neumann S."/>
            <person name="Argiriou A."/>
            <person name="Vitale D."/>
            <person name="Liguori R."/>
            <person name="Piravandi E."/>
            <person name="Massenet O."/>
            <person name="Quigley F."/>
            <person name="Clabauld G."/>
            <person name="Muendlein A."/>
            <person name="Felber R."/>
            <person name="Schnabl S."/>
            <person name="Hiller R."/>
            <person name="Schmidt W."/>
            <person name="Lecharny A."/>
            <person name="Aubourg S."/>
            <person name="Chefdor F."/>
            <person name="Cooke R."/>
            <person name="Berger C."/>
            <person name="Monfort A."/>
            <person name="Casacuberta E."/>
            <person name="Gibbons T."/>
            <person name="Weber N."/>
            <person name="Vandenbol M."/>
            <person name="Bargues M."/>
            <person name="Terol J."/>
            <person name="Torres A."/>
            <person name="Perez-Perez A."/>
            <person name="Purnelle B."/>
            <person name="Bent E."/>
            <person name="Johnson S."/>
            <person name="Tacon D."/>
            <person name="Jesse T."/>
            <person name="Heijnen L."/>
            <person name="Schwarz S."/>
            <person name="Scholler P."/>
            <person name="Heber S."/>
            <person name="Francs P."/>
            <person name="Bielke C."/>
            <person name="Frishman D."/>
            <person name="Haase D."/>
            <person name="Lemcke K."/>
            <person name="Mewes H.-W."/>
            <person name="Stocker S."/>
            <person name="Zaccaria P."/>
            <person name="Bevan M."/>
            <person name="Wilson R.K."/>
            <person name="de la Bastide M."/>
            <person name="Habermann K."/>
            <person name="Parnell L."/>
            <person name="Dedhia N."/>
            <person name="Gnoj L."/>
            <person name="Schutz K."/>
            <person name="Huang E."/>
            <person name="Spiegel L."/>
            <person name="Sekhon M."/>
            <person name="Murray J."/>
            <person name="Sheet P."/>
            <person name="Cordes M."/>
            <person name="Abu-Threideh J."/>
            <person name="Stoneking T."/>
            <person name="Kalicki J."/>
            <person name="Graves T."/>
            <person name="Harmon G."/>
            <person name="Edwards J."/>
            <person name="Latreille P."/>
            <person name="Courtney L."/>
            <person name="Cloud J."/>
            <person name="Abbott A."/>
            <person name="Scott K."/>
            <person name="Johnson D."/>
            <person name="Minx P."/>
            <person name="Bentley D."/>
            <person name="Fulton B."/>
            <person name="Miller N."/>
            <person name="Greco T."/>
            <person name="Kemp K."/>
            <person name="Kramer J."/>
            <person name="Fulton L."/>
            <person name="Mardis E."/>
            <person name="Dante M."/>
            <person name="Pepin K."/>
            <person name="Hillier L.W."/>
            <person name="Nelson J."/>
            <person name="Spieth J."/>
            <person name="Ryan E."/>
            <person name="Andrews S."/>
            <person name="Geisel C."/>
            <person name="Layman D."/>
            <person name="Du H."/>
            <person name="Ali J."/>
            <person name="Berghoff A."/>
            <person name="Jones K."/>
            <person name="Drone K."/>
            <person name="Cotton M."/>
            <person name="Joshu C."/>
            <person name="Antonoiu B."/>
            <person name="Zidanic M."/>
            <person name="Strong C."/>
            <person name="Sun H."/>
            <person name="Lamar B."/>
            <person name="Yordan C."/>
            <person name="Ma P."/>
            <person name="Zhong J."/>
            <person name="Preston R."/>
            <person name="Vil D."/>
            <person name="Shekher M."/>
            <person name="Matero A."/>
            <person name="Shah R."/>
            <person name="Swaby I.K."/>
            <person name="O'Shaughnessy A."/>
            <person name="Rodriguez M."/>
            <person name="Hoffman J."/>
            <person name="Till S."/>
            <person name="Granat S."/>
            <person name="Shohdy N."/>
            <person name="Hasegawa A."/>
            <person name="Hameed A."/>
            <person name="Lodhi M."/>
            <person name="Johnson A."/>
            <person name="Chen E."/>
            <person name="Marra M.A."/>
            <person name="Martienssen R."/>
            <person name="McCombie W.R."/>
        </authorList>
    </citation>
    <scope>NUCLEOTIDE SEQUENCE [LARGE SCALE GENOMIC DNA]</scope>
    <source>
        <strain>cv. Columbia</strain>
    </source>
</reference>
<reference key="3">
    <citation type="journal article" date="2017" name="Plant J.">
        <title>Araport11: a complete reannotation of the Arabidopsis thaliana reference genome.</title>
        <authorList>
            <person name="Cheng C.Y."/>
            <person name="Krishnakumar V."/>
            <person name="Chan A.P."/>
            <person name="Thibaud-Nissen F."/>
            <person name="Schobel S."/>
            <person name="Town C.D."/>
        </authorList>
    </citation>
    <scope>GENOME REANNOTATION</scope>
    <source>
        <strain>cv. Columbia</strain>
    </source>
</reference>
<reference key="4">
    <citation type="journal article" date="2003" name="Science">
        <title>Empirical analysis of transcriptional activity in the Arabidopsis genome.</title>
        <authorList>
            <person name="Yamada K."/>
            <person name="Lim J."/>
            <person name="Dale J.M."/>
            <person name="Chen H."/>
            <person name="Shinn P."/>
            <person name="Palm C.J."/>
            <person name="Southwick A.M."/>
            <person name="Wu H.C."/>
            <person name="Kim C.J."/>
            <person name="Nguyen M."/>
            <person name="Pham P.K."/>
            <person name="Cheuk R.F."/>
            <person name="Karlin-Newmann G."/>
            <person name="Liu S.X."/>
            <person name="Lam B."/>
            <person name="Sakano H."/>
            <person name="Wu T."/>
            <person name="Yu G."/>
            <person name="Miranda M."/>
            <person name="Quach H.L."/>
            <person name="Tripp M."/>
            <person name="Chang C.H."/>
            <person name="Lee J.M."/>
            <person name="Toriumi M.J."/>
            <person name="Chan M.M."/>
            <person name="Tang C.C."/>
            <person name="Onodera C.S."/>
            <person name="Deng J.M."/>
            <person name="Akiyama K."/>
            <person name="Ansari Y."/>
            <person name="Arakawa T."/>
            <person name="Banh J."/>
            <person name="Banno F."/>
            <person name="Bowser L."/>
            <person name="Brooks S.Y."/>
            <person name="Carninci P."/>
            <person name="Chao Q."/>
            <person name="Choy N."/>
            <person name="Enju A."/>
            <person name="Goldsmith A.D."/>
            <person name="Gurjal M."/>
            <person name="Hansen N.F."/>
            <person name="Hayashizaki Y."/>
            <person name="Johnson-Hopson C."/>
            <person name="Hsuan V.W."/>
            <person name="Iida K."/>
            <person name="Karnes M."/>
            <person name="Khan S."/>
            <person name="Koesema E."/>
            <person name="Ishida J."/>
            <person name="Jiang P.X."/>
            <person name="Jones T."/>
            <person name="Kawai J."/>
            <person name="Kamiya A."/>
            <person name="Meyers C."/>
            <person name="Nakajima M."/>
            <person name="Narusaka M."/>
            <person name="Seki M."/>
            <person name="Sakurai T."/>
            <person name="Satou M."/>
            <person name="Tamse R."/>
            <person name="Vaysberg M."/>
            <person name="Wallender E.K."/>
            <person name="Wong C."/>
            <person name="Yamamura Y."/>
            <person name="Yuan S."/>
            <person name="Shinozaki K."/>
            <person name="Davis R.W."/>
            <person name="Theologis A."/>
            <person name="Ecker J.R."/>
        </authorList>
    </citation>
    <scope>NUCLEOTIDE SEQUENCE [LARGE SCALE MRNA]</scope>
    <source>
        <strain>cv. Columbia</strain>
    </source>
</reference>
<keyword id="KW-0479">Metal-binding</keyword>
<keyword id="KW-1185">Reference proteome</keyword>
<keyword id="KW-0808">Transferase</keyword>
<keyword id="KW-0833">Ubl conjugation pathway</keyword>
<keyword id="KW-0862">Zinc</keyword>
<keyword id="KW-0863">Zinc-finger</keyword>
<feature type="chain" id="PRO_0000056037" description="Probable E3 ubiquitin-protein ligase RHA4A">
    <location>
        <begin position="1"/>
        <end position="174"/>
    </location>
</feature>
<feature type="zinc finger region" description="RING-type; atypical" evidence="2">
    <location>
        <begin position="105"/>
        <end position="147"/>
    </location>
</feature>
<feature type="region of interest" description="Disordered" evidence="3">
    <location>
        <begin position="155"/>
        <end position="174"/>
    </location>
</feature>
<gene>
    <name evidence="5" type="primary">RHA4A</name>
    <name type="ordered locus">At4g24015</name>
    <name type="ORF">T32A16.6</name>
</gene>
<accession>Q84TF5</accession>
<accession>Q9ZT45</accession>